<name>RL28_METNO</name>
<evidence type="ECO:0000255" key="1">
    <source>
        <dbReference type="HAMAP-Rule" id="MF_00373"/>
    </source>
</evidence>
<evidence type="ECO:0000305" key="2"/>
<accession>B8ICZ4</accession>
<dbReference type="EMBL" id="CP001349">
    <property type="protein sequence ID" value="ACL59386.1"/>
    <property type="molecule type" value="Genomic_DNA"/>
</dbReference>
<dbReference type="RefSeq" id="WP_015931024.1">
    <property type="nucleotide sequence ID" value="NC_011894.1"/>
</dbReference>
<dbReference type="SMR" id="B8ICZ4"/>
<dbReference type="STRING" id="460265.Mnod_4518"/>
<dbReference type="KEGG" id="mno:Mnod_4518"/>
<dbReference type="eggNOG" id="COG0227">
    <property type="taxonomic scope" value="Bacteria"/>
</dbReference>
<dbReference type="HOGENOM" id="CLU_064548_4_2_5"/>
<dbReference type="OrthoDB" id="9805609at2"/>
<dbReference type="Proteomes" id="UP000008207">
    <property type="component" value="Chromosome"/>
</dbReference>
<dbReference type="GO" id="GO:0022625">
    <property type="term" value="C:cytosolic large ribosomal subunit"/>
    <property type="evidence" value="ECO:0007669"/>
    <property type="project" value="TreeGrafter"/>
</dbReference>
<dbReference type="GO" id="GO:0003735">
    <property type="term" value="F:structural constituent of ribosome"/>
    <property type="evidence" value="ECO:0007669"/>
    <property type="project" value="InterPro"/>
</dbReference>
<dbReference type="GO" id="GO:0006412">
    <property type="term" value="P:translation"/>
    <property type="evidence" value="ECO:0007669"/>
    <property type="project" value="UniProtKB-UniRule"/>
</dbReference>
<dbReference type="Gene3D" id="2.30.170.40">
    <property type="entry name" value="Ribosomal protein L28/L24"/>
    <property type="match status" value="1"/>
</dbReference>
<dbReference type="HAMAP" id="MF_00373">
    <property type="entry name" value="Ribosomal_bL28"/>
    <property type="match status" value="1"/>
</dbReference>
<dbReference type="InterPro" id="IPR026569">
    <property type="entry name" value="Ribosomal_bL28"/>
</dbReference>
<dbReference type="InterPro" id="IPR034704">
    <property type="entry name" value="Ribosomal_bL28/bL31-like_sf"/>
</dbReference>
<dbReference type="InterPro" id="IPR001383">
    <property type="entry name" value="Ribosomal_bL28_bact-type"/>
</dbReference>
<dbReference type="InterPro" id="IPR037147">
    <property type="entry name" value="Ribosomal_bL28_sf"/>
</dbReference>
<dbReference type="NCBIfam" id="TIGR00009">
    <property type="entry name" value="L28"/>
    <property type="match status" value="1"/>
</dbReference>
<dbReference type="PANTHER" id="PTHR13528">
    <property type="entry name" value="39S RIBOSOMAL PROTEIN L28, MITOCHONDRIAL"/>
    <property type="match status" value="1"/>
</dbReference>
<dbReference type="PANTHER" id="PTHR13528:SF2">
    <property type="entry name" value="LARGE RIBOSOMAL SUBUNIT PROTEIN BL28M"/>
    <property type="match status" value="1"/>
</dbReference>
<dbReference type="Pfam" id="PF00830">
    <property type="entry name" value="Ribosomal_L28"/>
    <property type="match status" value="1"/>
</dbReference>
<dbReference type="SUPFAM" id="SSF143800">
    <property type="entry name" value="L28p-like"/>
    <property type="match status" value="1"/>
</dbReference>
<gene>
    <name evidence="1" type="primary">rpmB</name>
    <name type="ordered locus">Mnod_4518</name>
</gene>
<organism>
    <name type="scientific">Methylobacterium nodulans (strain LMG 21967 / CNCM I-2342 / ORS 2060)</name>
    <dbReference type="NCBI Taxonomy" id="460265"/>
    <lineage>
        <taxon>Bacteria</taxon>
        <taxon>Pseudomonadati</taxon>
        <taxon>Pseudomonadota</taxon>
        <taxon>Alphaproteobacteria</taxon>
        <taxon>Hyphomicrobiales</taxon>
        <taxon>Methylobacteriaceae</taxon>
        <taxon>Methylobacterium</taxon>
    </lineage>
</organism>
<comment type="similarity">
    <text evidence="1">Belongs to the bacterial ribosomal protein bL28 family.</text>
</comment>
<protein>
    <recommendedName>
        <fullName evidence="1">Large ribosomal subunit protein bL28</fullName>
    </recommendedName>
    <alternativeName>
        <fullName evidence="2">50S ribosomal protein L28</fullName>
    </alternativeName>
</protein>
<feature type="chain" id="PRO_1000195931" description="Large ribosomal subunit protein bL28">
    <location>
        <begin position="1"/>
        <end position="96"/>
    </location>
</feature>
<keyword id="KW-1185">Reference proteome</keyword>
<keyword id="KW-0687">Ribonucleoprotein</keyword>
<keyword id="KW-0689">Ribosomal protein</keyword>
<reference key="1">
    <citation type="submission" date="2009-01" db="EMBL/GenBank/DDBJ databases">
        <title>Complete sequence of chromosome of Methylobacterium nodulans ORS 2060.</title>
        <authorList>
            <consortium name="US DOE Joint Genome Institute"/>
            <person name="Lucas S."/>
            <person name="Copeland A."/>
            <person name="Lapidus A."/>
            <person name="Glavina del Rio T."/>
            <person name="Dalin E."/>
            <person name="Tice H."/>
            <person name="Bruce D."/>
            <person name="Goodwin L."/>
            <person name="Pitluck S."/>
            <person name="Sims D."/>
            <person name="Brettin T."/>
            <person name="Detter J.C."/>
            <person name="Han C."/>
            <person name="Larimer F."/>
            <person name="Land M."/>
            <person name="Hauser L."/>
            <person name="Kyrpides N."/>
            <person name="Ivanova N."/>
            <person name="Marx C.J."/>
            <person name="Richardson P."/>
        </authorList>
    </citation>
    <scope>NUCLEOTIDE SEQUENCE [LARGE SCALE GENOMIC DNA]</scope>
    <source>
        <strain>LMG 21967 / CNCM I-2342 / ORS 2060</strain>
    </source>
</reference>
<proteinExistence type="inferred from homology"/>
<sequence>MSRRCELTGKAVLTGHLVSHSNRKTKRRFLPNLCKVTLLSDTLGRSVRLRISANALRSVEHRGGLDAFLVKAGEQELSQNARLLKREIEKKLAEAA</sequence>